<name>RL35_WOLPM</name>
<comment type="similarity">
    <text evidence="1">Belongs to the bacterial ribosomal protein bL35 family.</text>
</comment>
<feature type="chain" id="PRO_0000177457" description="Large ribosomal subunit protein bL35">
    <location>
        <begin position="1"/>
        <end position="68"/>
    </location>
</feature>
<gene>
    <name evidence="1" type="primary">rpmI</name>
    <name type="ordered locus">WD_0864</name>
</gene>
<reference key="1">
    <citation type="journal article" date="2004" name="PLoS Biol.">
        <title>Phylogenomics of the reproductive parasite Wolbachia pipientis wMel: a streamlined genome overrun by mobile genetic elements.</title>
        <authorList>
            <person name="Wu M."/>
            <person name="Sun L.V."/>
            <person name="Vamathevan J.J."/>
            <person name="Riegler M."/>
            <person name="DeBoy R.T."/>
            <person name="Brownlie J.C."/>
            <person name="McGraw E.A."/>
            <person name="Martin W."/>
            <person name="Esser C."/>
            <person name="Ahmadinejad N."/>
            <person name="Wiegand C."/>
            <person name="Madupu R."/>
            <person name="Beanan M.J."/>
            <person name="Brinkac L.M."/>
            <person name="Daugherty S.C."/>
            <person name="Durkin A.S."/>
            <person name="Kolonay J.F."/>
            <person name="Nelson W.C."/>
            <person name="Mohamoud Y."/>
            <person name="Lee P."/>
            <person name="Berry K.J."/>
            <person name="Young M.B."/>
            <person name="Utterback T.R."/>
            <person name="Weidman J.F."/>
            <person name="Nierman W.C."/>
            <person name="Paulsen I.T."/>
            <person name="Nelson K.E."/>
            <person name="Tettelin H."/>
            <person name="O'Neill S.L."/>
            <person name="Eisen J.A."/>
        </authorList>
    </citation>
    <scope>NUCLEOTIDE SEQUENCE [LARGE SCALE GENOMIC DNA]</scope>
</reference>
<sequence length="68" mass="7705">MKKIKLKTKSSVKKRFHLTAKGKVISTQSGKRHGMVKRSKSNIRNQRGTTILGKSDSRIVKLHMPYGI</sequence>
<accession>Q73GR8</accession>
<dbReference type="EMBL" id="AE017196">
    <property type="protein sequence ID" value="AAS14548.1"/>
    <property type="molecule type" value="Genomic_DNA"/>
</dbReference>
<dbReference type="RefSeq" id="WP_007548610.1">
    <property type="nucleotide sequence ID" value="NZ_OX384529.1"/>
</dbReference>
<dbReference type="SMR" id="Q73GR8"/>
<dbReference type="EnsemblBacteria" id="AAS14548">
    <property type="protein sequence ID" value="AAS14548"/>
    <property type="gene ID" value="WD_0864"/>
</dbReference>
<dbReference type="GeneID" id="70036339"/>
<dbReference type="KEGG" id="wol:WD_0864"/>
<dbReference type="eggNOG" id="COG0291">
    <property type="taxonomic scope" value="Bacteria"/>
</dbReference>
<dbReference type="Proteomes" id="UP000008215">
    <property type="component" value="Chromosome"/>
</dbReference>
<dbReference type="GO" id="GO:1990904">
    <property type="term" value="C:ribonucleoprotein complex"/>
    <property type="evidence" value="ECO:0007669"/>
    <property type="project" value="UniProtKB-KW"/>
</dbReference>
<dbReference type="GO" id="GO:0005840">
    <property type="term" value="C:ribosome"/>
    <property type="evidence" value="ECO:0007669"/>
    <property type="project" value="UniProtKB-KW"/>
</dbReference>
<dbReference type="GO" id="GO:0003735">
    <property type="term" value="F:structural constituent of ribosome"/>
    <property type="evidence" value="ECO:0007669"/>
    <property type="project" value="InterPro"/>
</dbReference>
<dbReference type="GO" id="GO:0006412">
    <property type="term" value="P:translation"/>
    <property type="evidence" value="ECO:0007669"/>
    <property type="project" value="UniProtKB-UniRule"/>
</dbReference>
<dbReference type="FunFam" id="4.10.410.60:FF:000001">
    <property type="entry name" value="50S ribosomal protein L35"/>
    <property type="match status" value="1"/>
</dbReference>
<dbReference type="Gene3D" id="4.10.410.60">
    <property type="match status" value="1"/>
</dbReference>
<dbReference type="HAMAP" id="MF_00514">
    <property type="entry name" value="Ribosomal_bL35"/>
    <property type="match status" value="1"/>
</dbReference>
<dbReference type="InterPro" id="IPR001706">
    <property type="entry name" value="Ribosomal_bL35"/>
</dbReference>
<dbReference type="InterPro" id="IPR021137">
    <property type="entry name" value="Ribosomal_bL35-like"/>
</dbReference>
<dbReference type="InterPro" id="IPR018265">
    <property type="entry name" value="Ribosomal_bL35_CS"/>
</dbReference>
<dbReference type="InterPro" id="IPR037229">
    <property type="entry name" value="Ribosomal_bL35_sf"/>
</dbReference>
<dbReference type="NCBIfam" id="TIGR00001">
    <property type="entry name" value="rpmI_bact"/>
    <property type="match status" value="1"/>
</dbReference>
<dbReference type="Pfam" id="PF01632">
    <property type="entry name" value="Ribosomal_L35p"/>
    <property type="match status" value="1"/>
</dbReference>
<dbReference type="PRINTS" id="PR00064">
    <property type="entry name" value="RIBOSOMALL35"/>
</dbReference>
<dbReference type="SUPFAM" id="SSF143034">
    <property type="entry name" value="L35p-like"/>
    <property type="match status" value="1"/>
</dbReference>
<dbReference type="PROSITE" id="PS00936">
    <property type="entry name" value="RIBOSOMAL_L35"/>
    <property type="match status" value="1"/>
</dbReference>
<evidence type="ECO:0000255" key="1">
    <source>
        <dbReference type="HAMAP-Rule" id="MF_00514"/>
    </source>
</evidence>
<evidence type="ECO:0000305" key="2"/>
<organism>
    <name type="scientific">Wolbachia pipientis wMel</name>
    <dbReference type="NCBI Taxonomy" id="163164"/>
    <lineage>
        <taxon>Bacteria</taxon>
        <taxon>Pseudomonadati</taxon>
        <taxon>Pseudomonadota</taxon>
        <taxon>Alphaproteobacteria</taxon>
        <taxon>Rickettsiales</taxon>
        <taxon>Anaplasmataceae</taxon>
        <taxon>Wolbachieae</taxon>
        <taxon>Wolbachia</taxon>
    </lineage>
</organism>
<proteinExistence type="inferred from homology"/>
<keyword id="KW-0687">Ribonucleoprotein</keyword>
<keyword id="KW-0689">Ribosomal protein</keyword>
<protein>
    <recommendedName>
        <fullName evidence="1">Large ribosomal subunit protein bL35</fullName>
    </recommendedName>
    <alternativeName>
        <fullName evidence="2">50S ribosomal protein L35</fullName>
    </alternativeName>
</protein>